<organism>
    <name type="scientific">Heterobasidion annosum</name>
    <name type="common">Root rot fungus</name>
    <name type="synonym">Polyporus annosus</name>
    <dbReference type="NCBI Taxonomy" id="13563"/>
    <lineage>
        <taxon>Eukaryota</taxon>
        <taxon>Fungi</taxon>
        <taxon>Dikarya</taxon>
        <taxon>Basidiomycota</taxon>
        <taxon>Agaricomycotina</taxon>
        <taxon>Agaricomycetes</taxon>
        <taxon>Russulales</taxon>
        <taxon>Bondarzewiaceae</taxon>
        <taxon>Heterobasidion</taxon>
        <taxon>Heterobasidion annosum species complex</taxon>
    </lineage>
</organism>
<sequence>MFFRISTVFVVALAAFAAASPAPWGAPPPTTTTHPPVTTTVTVTAPATTTTIPASQCNTGDAQCCNSVQSATAPAVTSLLGLLGIVLEDINVLVGLSCDPISVIGVGGGANCVQQPVCCENNNFNGLINIGCTPINIFL</sequence>
<gene>
    <name evidence="4" type="primary">Hah1</name>
</gene>
<dbReference type="EMBL" id="DQ198365">
    <property type="protein sequence ID" value="ABA46363.1"/>
    <property type="molecule type" value="Genomic_DNA"/>
</dbReference>
<dbReference type="GO" id="GO:0005576">
    <property type="term" value="C:extracellular region"/>
    <property type="evidence" value="ECO:0007669"/>
    <property type="project" value="UniProtKB-KW"/>
</dbReference>
<dbReference type="GO" id="GO:0009277">
    <property type="term" value="C:fungal-type cell wall"/>
    <property type="evidence" value="ECO:0007669"/>
    <property type="project" value="InterPro"/>
</dbReference>
<dbReference type="GO" id="GO:0005199">
    <property type="term" value="F:structural constituent of cell wall"/>
    <property type="evidence" value="ECO:0007669"/>
    <property type="project" value="InterPro"/>
</dbReference>
<dbReference type="CDD" id="cd23507">
    <property type="entry name" value="hydrophobin_I"/>
    <property type="match status" value="1"/>
</dbReference>
<dbReference type="InterPro" id="IPR001338">
    <property type="entry name" value="Hydrophobin"/>
</dbReference>
<dbReference type="Pfam" id="PF01185">
    <property type="entry name" value="Hydrophobin"/>
    <property type="match status" value="1"/>
</dbReference>
<dbReference type="SMART" id="SM00075">
    <property type="entry name" value="HYDRO"/>
    <property type="match status" value="1"/>
</dbReference>
<comment type="function">
    <text evidence="3 5">Aerial growth, conidiation, and dispersal of filamentous fungi in the environment rely upon a capability of their secreting small amphipathic proteins called hydrophobins (HPBs) with low sequence identity. Class I can self-assemble into an outermost layer of rodlet bundles on aerial cell surfaces, conferring cellular hydrophobicity that supports fungal growth, development and dispersal; whereas Class II form highly ordered films at water-air interfaces through intermolecular interactions but contribute nothing to the rodlet structure (Probable). Hah1 is a class I hydrophobin that is involved in aerial growth of mycelia, but does not play a role in pathogenesis (PubMed:17682775).</text>
</comment>
<comment type="subunit">
    <text evidence="1">Self-assembles to form functional amyloid fibrils called rodlets. Self-assembly into fibrillar rodlets occurs spontaneously at hydrophobic:hydrophilic interfaces and the rodlets further associate laterally to form amphipathic monolayers.</text>
</comment>
<comment type="subcellular location">
    <subcellularLocation>
        <location evidence="6">Secreted</location>
    </subcellularLocation>
    <subcellularLocation>
        <location evidence="6">Secreted</location>
        <location evidence="6">Cell wall</location>
    </subcellularLocation>
</comment>
<comment type="developmental stage">
    <text evidence="3">Expression in high aerial hyphae but low in submerged hyphae.</text>
</comment>
<comment type="induction">
    <text evidence="3">Expression is low during in vitro infection of pine seedlings.</text>
</comment>
<comment type="similarity">
    <text evidence="5">Belongs to the fungal hydrophobin family.</text>
</comment>
<evidence type="ECO:0000250" key="1">
    <source>
        <dbReference type="UniProtKB" id="Q04571"/>
    </source>
</evidence>
<evidence type="ECO:0000255" key="2"/>
<evidence type="ECO:0000269" key="3">
    <source>
    </source>
</evidence>
<evidence type="ECO:0000303" key="4">
    <source>
    </source>
</evidence>
<evidence type="ECO:0000305" key="5"/>
<evidence type="ECO:0000305" key="6">
    <source>
    </source>
</evidence>
<feature type="signal peptide" evidence="2">
    <location>
        <begin position="1"/>
        <end position="21"/>
    </location>
</feature>
<feature type="chain" id="PRO_5013985527" description="Class I hydrophobin 1">
    <location>
        <begin position="22"/>
        <end position="139"/>
    </location>
</feature>
<feature type="disulfide bond" evidence="1">
    <location>
        <begin position="57"/>
        <end position="118"/>
    </location>
</feature>
<feature type="disulfide bond" evidence="1">
    <location>
        <begin position="64"/>
        <end position="112"/>
    </location>
</feature>
<feature type="disulfide bond" evidence="1">
    <location>
        <begin position="65"/>
        <end position="98"/>
    </location>
</feature>
<feature type="disulfide bond" evidence="1">
    <location>
        <begin position="119"/>
        <end position="132"/>
    </location>
</feature>
<reference key="1">
    <citation type="journal article" date="2007" name="Mycologia">
        <title>Two hydrophobin genes from the conifer pathogen Heterobasidion annosum are expressed in aerial hyphae.</title>
        <authorList>
            <person name="Karlsson M."/>
            <person name="Stenlid J."/>
            <person name="Olson A."/>
        </authorList>
    </citation>
    <scope>NUCLEOTIDE SEQUENCE [GENOMIC DNA]</scope>
    <scope>FUNCTION</scope>
    <scope>INDUCTION</scope>
    <scope>DEVELOPMENTAL STAGE</scope>
</reference>
<protein>
    <recommendedName>
        <fullName evidence="4">Class I hydrophobin 1</fullName>
    </recommendedName>
</protein>
<keyword id="KW-0134">Cell wall</keyword>
<keyword id="KW-1015">Disulfide bond</keyword>
<keyword id="KW-0964">Secreted</keyword>
<keyword id="KW-0732">Signal</keyword>
<proteinExistence type="evidence at transcript level"/>
<accession>Q3HS86</accession>
<name>HAH1_HETAN</name>